<proteinExistence type="inferred from homology"/>
<organism>
    <name type="scientific">Nectogale elegans</name>
    <name type="common">Elegant water shrew</name>
    <dbReference type="NCBI Taxonomy" id="268758"/>
    <lineage>
        <taxon>Eukaryota</taxon>
        <taxon>Metazoa</taxon>
        <taxon>Chordata</taxon>
        <taxon>Craniata</taxon>
        <taxon>Vertebrata</taxon>
        <taxon>Euteleostomi</taxon>
        <taxon>Mammalia</taxon>
        <taxon>Eutheria</taxon>
        <taxon>Laurasiatheria</taxon>
        <taxon>Eulipotyphla</taxon>
        <taxon>Soricidae</taxon>
        <taxon>Soricinae</taxon>
        <taxon>Nectogale</taxon>
    </lineage>
</organism>
<protein>
    <recommendedName>
        <fullName>Cytochrome b</fullName>
    </recommendedName>
    <alternativeName>
        <fullName>Complex III subunit 3</fullName>
    </alternativeName>
    <alternativeName>
        <fullName>Complex III subunit III</fullName>
    </alternativeName>
    <alternativeName>
        <fullName>Cytochrome b-c1 complex subunit 3</fullName>
    </alternativeName>
    <alternativeName>
        <fullName>Ubiquinol-cytochrome-c reductase complex cytochrome b subunit</fullName>
    </alternativeName>
</protein>
<sequence length="379" mass="42591">MINIRKTHPLMKIINNSFIDLPAPSNISSWWNFGSLLGICLVIQILTGLFLAMHYTSDTTTAFSSVTHICRDVNYGWLIRYLHANGASMFFICLFLHVGRGLYYGSYMFLETWNIGVLLLFAVMATAFMGYVLPWGQMSFWGATVITNLLSAIPYIGSDLVQWIWGGFSVDKATLTRFFAFHFILPFIIAALAGVHLLFLHETGSNNPTGISSDADKIPFHPYYTIKDILGALLLILILTTLVLFSPDLLGDPDNYTPANPLNTPPHIKPEWYFLFAYAILRSIPNKLGGVLALVLSILVLAFIPLLHTSKQRSMMFRPISQCLFWILVADLLTLTWIGGQPVEHPFIIIGQLASILYFLLILVLMPITSLLENNLLKW</sequence>
<geneLocation type="mitochondrion"/>
<accession>Q1XIN6</accession>
<name>CYB_NECEL</name>
<gene>
    <name type="primary">MT-CYB</name>
    <name type="synonym">COB</name>
    <name type="synonym">CYTB</name>
    <name type="synonym">MTCYB</name>
</gene>
<keyword id="KW-0249">Electron transport</keyword>
<keyword id="KW-0349">Heme</keyword>
<keyword id="KW-0408">Iron</keyword>
<keyword id="KW-0472">Membrane</keyword>
<keyword id="KW-0479">Metal-binding</keyword>
<keyword id="KW-0496">Mitochondrion</keyword>
<keyword id="KW-0999">Mitochondrion inner membrane</keyword>
<keyword id="KW-0679">Respiratory chain</keyword>
<keyword id="KW-0812">Transmembrane</keyword>
<keyword id="KW-1133">Transmembrane helix</keyword>
<keyword id="KW-0813">Transport</keyword>
<keyword id="KW-0830">Ubiquinone</keyword>
<evidence type="ECO:0000250" key="1"/>
<evidence type="ECO:0000250" key="2">
    <source>
        <dbReference type="UniProtKB" id="P00157"/>
    </source>
</evidence>
<evidence type="ECO:0000255" key="3">
    <source>
        <dbReference type="PROSITE-ProRule" id="PRU00967"/>
    </source>
</evidence>
<evidence type="ECO:0000255" key="4">
    <source>
        <dbReference type="PROSITE-ProRule" id="PRU00968"/>
    </source>
</evidence>
<reference key="1">
    <citation type="submission" date="2004-03" db="EMBL/GenBank/DDBJ databases">
        <title>Molecular phylogenetics of the Soricidae (Insectivora, Mammalia) based on mitochondrial cytochrome b gene sequences.</title>
        <authorList>
            <person name="Ohdachi S.D."/>
            <person name="Iwasa M.A."/>
            <person name="Abe H."/>
            <person name="Vogel P."/>
            <person name="Oshida T."/>
            <person name="Lin L.K."/>
            <person name="Hasegawa M."/>
        </authorList>
    </citation>
    <scope>NUCLEOTIDE SEQUENCE [GENOMIC DNA]</scope>
    <source>
        <tissue>Muscle</tissue>
    </source>
</reference>
<dbReference type="EMBL" id="AB175095">
    <property type="protein sequence ID" value="BAE92660.1"/>
    <property type="molecule type" value="Genomic_DNA"/>
</dbReference>
<dbReference type="SMR" id="Q1XIN6"/>
<dbReference type="GO" id="GO:0005743">
    <property type="term" value="C:mitochondrial inner membrane"/>
    <property type="evidence" value="ECO:0007669"/>
    <property type="project" value="UniProtKB-SubCell"/>
</dbReference>
<dbReference type="GO" id="GO:0045275">
    <property type="term" value="C:respiratory chain complex III"/>
    <property type="evidence" value="ECO:0007669"/>
    <property type="project" value="InterPro"/>
</dbReference>
<dbReference type="GO" id="GO:0046872">
    <property type="term" value="F:metal ion binding"/>
    <property type="evidence" value="ECO:0007669"/>
    <property type="project" value="UniProtKB-KW"/>
</dbReference>
<dbReference type="GO" id="GO:0008121">
    <property type="term" value="F:ubiquinol-cytochrome-c reductase activity"/>
    <property type="evidence" value="ECO:0007669"/>
    <property type="project" value="InterPro"/>
</dbReference>
<dbReference type="GO" id="GO:0006122">
    <property type="term" value="P:mitochondrial electron transport, ubiquinol to cytochrome c"/>
    <property type="evidence" value="ECO:0007669"/>
    <property type="project" value="TreeGrafter"/>
</dbReference>
<dbReference type="CDD" id="cd00290">
    <property type="entry name" value="cytochrome_b_C"/>
    <property type="match status" value="1"/>
</dbReference>
<dbReference type="CDD" id="cd00284">
    <property type="entry name" value="Cytochrome_b_N"/>
    <property type="match status" value="1"/>
</dbReference>
<dbReference type="FunFam" id="1.20.810.10:FF:000002">
    <property type="entry name" value="Cytochrome b"/>
    <property type="match status" value="1"/>
</dbReference>
<dbReference type="Gene3D" id="1.20.810.10">
    <property type="entry name" value="Cytochrome Bc1 Complex, Chain C"/>
    <property type="match status" value="1"/>
</dbReference>
<dbReference type="InterPro" id="IPR005798">
    <property type="entry name" value="Cyt_b/b6_C"/>
</dbReference>
<dbReference type="InterPro" id="IPR036150">
    <property type="entry name" value="Cyt_b/b6_C_sf"/>
</dbReference>
<dbReference type="InterPro" id="IPR005797">
    <property type="entry name" value="Cyt_b/b6_N"/>
</dbReference>
<dbReference type="InterPro" id="IPR027387">
    <property type="entry name" value="Cytb/b6-like_sf"/>
</dbReference>
<dbReference type="InterPro" id="IPR030689">
    <property type="entry name" value="Cytochrome_b"/>
</dbReference>
<dbReference type="InterPro" id="IPR048260">
    <property type="entry name" value="Cytochrome_b_C_euk/bac"/>
</dbReference>
<dbReference type="InterPro" id="IPR048259">
    <property type="entry name" value="Cytochrome_b_N_euk/bac"/>
</dbReference>
<dbReference type="InterPro" id="IPR016174">
    <property type="entry name" value="Di-haem_cyt_TM"/>
</dbReference>
<dbReference type="PANTHER" id="PTHR19271">
    <property type="entry name" value="CYTOCHROME B"/>
    <property type="match status" value="1"/>
</dbReference>
<dbReference type="PANTHER" id="PTHR19271:SF16">
    <property type="entry name" value="CYTOCHROME B"/>
    <property type="match status" value="1"/>
</dbReference>
<dbReference type="Pfam" id="PF00032">
    <property type="entry name" value="Cytochrom_B_C"/>
    <property type="match status" value="1"/>
</dbReference>
<dbReference type="Pfam" id="PF00033">
    <property type="entry name" value="Cytochrome_B"/>
    <property type="match status" value="1"/>
</dbReference>
<dbReference type="PIRSF" id="PIRSF038885">
    <property type="entry name" value="COB"/>
    <property type="match status" value="1"/>
</dbReference>
<dbReference type="SUPFAM" id="SSF81648">
    <property type="entry name" value="a domain/subunit of cytochrome bc1 complex (Ubiquinol-cytochrome c reductase)"/>
    <property type="match status" value="1"/>
</dbReference>
<dbReference type="SUPFAM" id="SSF81342">
    <property type="entry name" value="Transmembrane di-heme cytochromes"/>
    <property type="match status" value="1"/>
</dbReference>
<dbReference type="PROSITE" id="PS51003">
    <property type="entry name" value="CYTB_CTER"/>
    <property type="match status" value="1"/>
</dbReference>
<dbReference type="PROSITE" id="PS51002">
    <property type="entry name" value="CYTB_NTER"/>
    <property type="match status" value="1"/>
</dbReference>
<comment type="function">
    <text evidence="2">Component of the ubiquinol-cytochrome c reductase complex (complex III or cytochrome b-c1 complex) that is part of the mitochondrial respiratory chain. The b-c1 complex mediates electron transfer from ubiquinol to cytochrome c. Contributes to the generation of a proton gradient across the mitochondrial membrane that is then used for ATP synthesis.</text>
</comment>
<comment type="cofactor">
    <cofactor evidence="2">
        <name>heme b</name>
        <dbReference type="ChEBI" id="CHEBI:60344"/>
    </cofactor>
    <text evidence="2">Binds 2 heme b groups non-covalently.</text>
</comment>
<comment type="subunit">
    <text evidence="2">The cytochrome bc1 complex contains 11 subunits: 3 respiratory subunits (MT-CYB, CYC1 and UQCRFS1), 2 core proteins (UQCRC1 and UQCRC2) and 6 low-molecular weight proteins (UQCRH/QCR6, UQCRB/QCR7, UQCRQ/QCR8, UQCR10/QCR9, UQCR11/QCR10 and a cleavage product of UQCRFS1). This cytochrome bc1 complex then forms a dimer.</text>
</comment>
<comment type="subcellular location">
    <subcellularLocation>
        <location evidence="2">Mitochondrion inner membrane</location>
        <topology evidence="2">Multi-pass membrane protein</topology>
    </subcellularLocation>
</comment>
<comment type="miscellaneous">
    <text evidence="1">Heme 1 (or BL or b562) is low-potential and absorbs at about 562 nm, and heme 2 (or BH or b566) is high-potential and absorbs at about 566 nm.</text>
</comment>
<comment type="similarity">
    <text evidence="3 4">Belongs to the cytochrome b family.</text>
</comment>
<comment type="caution">
    <text evidence="2">The full-length protein contains only eight transmembrane helices, not nine as predicted by bioinformatics tools.</text>
</comment>
<feature type="chain" id="PRO_0000254739" description="Cytochrome b">
    <location>
        <begin position="1"/>
        <end position="379"/>
    </location>
</feature>
<feature type="transmembrane region" description="Helical" evidence="2">
    <location>
        <begin position="33"/>
        <end position="53"/>
    </location>
</feature>
<feature type="transmembrane region" description="Helical" evidence="2">
    <location>
        <begin position="77"/>
        <end position="98"/>
    </location>
</feature>
<feature type="transmembrane region" description="Helical" evidence="2">
    <location>
        <begin position="113"/>
        <end position="133"/>
    </location>
</feature>
<feature type="transmembrane region" description="Helical" evidence="2">
    <location>
        <begin position="178"/>
        <end position="198"/>
    </location>
</feature>
<feature type="transmembrane region" description="Helical" evidence="2">
    <location>
        <begin position="226"/>
        <end position="246"/>
    </location>
</feature>
<feature type="transmembrane region" description="Helical" evidence="2">
    <location>
        <begin position="288"/>
        <end position="308"/>
    </location>
</feature>
<feature type="transmembrane region" description="Helical" evidence="2">
    <location>
        <begin position="320"/>
        <end position="340"/>
    </location>
</feature>
<feature type="transmembrane region" description="Helical" evidence="2">
    <location>
        <begin position="347"/>
        <end position="367"/>
    </location>
</feature>
<feature type="binding site" description="axial binding residue" evidence="2">
    <location>
        <position position="83"/>
    </location>
    <ligand>
        <name>heme b</name>
        <dbReference type="ChEBI" id="CHEBI:60344"/>
        <label>b562</label>
    </ligand>
    <ligandPart>
        <name>Fe</name>
        <dbReference type="ChEBI" id="CHEBI:18248"/>
    </ligandPart>
</feature>
<feature type="binding site" description="axial binding residue" evidence="2">
    <location>
        <position position="97"/>
    </location>
    <ligand>
        <name>heme b</name>
        <dbReference type="ChEBI" id="CHEBI:60344"/>
        <label>b566</label>
    </ligand>
    <ligandPart>
        <name>Fe</name>
        <dbReference type="ChEBI" id="CHEBI:18248"/>
    </ligandPart>
</feature>
<feature type="binding site" description="axial binding residue" evidence="2">
    <location>
        <position position="182"/>
    </location>
    <ligand>
        <name>heme b</name>
        <dbReference type="ChEBI" id="CHEBI:60344"/>
        <label>b562</label>
    </ligand>
    <ligandPart>
        <name>Fe</name>
        <dbReference type="ChEBI" id="CHEBI:18248"/>
    </ligandPart>
</feature>
<feature type="binding site" description="axial binding residue" evidence="2">
    <location>
        <position position="196"/>
    </location>
    <ligand>
        <name>heme b</name>
        <dbReference type="ChEBI" id="CHEBI:60344"/>
        <label>b566</label>
    </ligand>
    <ligandPart>
        <name>Fe</name>
        <dbReference type="ChEBI" id="CHEBI:18248"/>
    </ligandPart>
</feature>
<feature type="binding site" evidence="2">
    <location>
        <position position="201"/>
    </location>
    <ligand>
        <name>a ubiquinone</name>
        <dbReference type="ChEBI" id="CHEBI:16389"/>
    </ligand>
</feature>